<name>OSR1_XENLA</name>
<comment type="function">
    <text evidence="3">Transcriptional repressor. Required for pronephric kidney development.</text>
</comment>
<comment type="subcellular location">
    <subcellularLocation>
        <location evidence="3 6">Nucleus</location>
    </subcellularLocation>
</comment>
<comment type="tissue specificity">
    <text evidence="3">At early gastrula stage, expressed in the involuting mesoderm and endoderm. During neurulation, expressed in the pronephric primordium, following expression of osr2. During tailbud (stage 35), expressed in the rectal diverticulum and in the kidney ducts.</text>
</comment>
<comment type="similarity">
    <text evidence="1">Belongs to the Odd C2H2-type zinc-finger protein family.</text>
</comment>
<dbReference type="EMBL" id="BJ624584">
    <property type="status" value="NOT_ANNOTATED_CDS"/>
    <property type="molecule type" value="mRNA"/>
</dbReference>
<dbReference type="EMBL" id="BJ637112">
    <property type="status" value="NOT_ANNOTATED_CDS"/>
    <property type="molecule type" value="mRNA"/>
</dbReference>
<dbReference type="EMBL" id="BN000922">
    <property type="protein sequence ID" value="CAJ80803.1"/>
    <property type="molecule type" value="mRNA"/>
</dbReference>
<dbReference type="RefSeq" id="NP_001161853.1">
    <property type="nucleotide sequence ID" value="NM_001168381.1"/>
</dbReference>
<dbReference type="SMR" id="P86413"/>
<dbReference type="GeneID" id="100313967"/>
<dbReference type="KEGG" id="xla:100313967"/>
<dbReference type="AGR" id="Xenbase:XB-GENE-17344349"/>
<dbReference type="CTD" id="100313967"/>
<dbReference type="Xenbase" id="XB-GENE-17344349">
    <property type="gene designation" value="osr1.L"/>
</dbReference>
<dbReference type="OMA" id="CIFCKEE"/>
<dbReference type="OrthoDB" id="9451254at2759"/>
<dbReference type="Proteomes" id="UP000186698">
    <property type="component" value="Chromosome 5L"/>
</dbReference>
<dbReference type="Bgee" id="100313967">
    <property type="expression patterns" value="Expressed in zone of skin and 15 other cell types or tissues"/>
</dbReference>
<dbReference type="GO" id="GO:0005634">
    <property type="term" value="C:nucleus"/>
    <property type="evidence" value="ECO:0000318"/>
    <property type="project" value="GO_Central"/>
</dbReference>
<dbReference type="GO" id="GO:0000981">
    <property type="term" value="F:DNA-binding transcription factor activity, RNA polymerase II-specific"/>
    <property type="evidence" value="ECO:0000318"/>
    <property type="project" value="GO_Central"/>
</dbReference>
<dbReference type="GO" id="GO:0000977">
    <property type="term" value="F:RNA polymerase II transcription regulatory region sequence-specific DNA binding"/>
    <property type="evidence" value="ECO:0000318"/>
    <property type="project" value="GO_Central"/>
</dbReference>
<dbReference type="GO" id="GO:0008270">
    <property type="term" value="F:zinc ion binding"/>
    <property type="evidence" value="ECO:0007669"/>
    <property type="project" value="UniProtKB-KW"/>
</dbReference>
<dbReference type="GO" id="GO:0071300">
    <property type="term" value="P:cellular response to retinoic acid"/>
    <property type="evidence" value="ECO:0000270"/>
    <property type="project" value="UniProtKB"/>
</dbReference>
<dbReference type="GO" id="GO:0045892">
    <property type="term" value="P:negative regulation of DNA-templated transcription"/>
    <property type="evidence" value="ECO:0000315"/>
    <property type="project" value="UniProtKB"/>
</dbReference>
<dbReference type="GO" id="GO:0000122">
    <property type="term" value="P:negative regulation of transcription by RNA polymerase II"/>
    <property type="evidence" value="ECO:0000315"/>
    <property type="project" value="UniProtKB"/>
</dbReference>
<dbReference type="GO" id="GO:0007389">
    <property type="term" value="P:pattern specification process"/>
    <property type="evidence" value="ECO:0000318"/>
    <property type="project" value="GO_Central"/>
</dbReference>
<dbReference type="GO" id="GO:0048793">
    <property type="term" value="P:pronephros development"/>
    <property type="evidence" value="ECO:0000315"/>
    <property type="project" value="UniProtKB"/>
</dbReference>
<dbReference type="GO" id="GO:0001655">
    <property type="term" value="P:urogenital system development"/>
    <property type="evidence" value="ECO:0000318"/>
    <property type="project" value="GO_Central"/>
</dbReference>
<dbReference type="FunFam" id="3.30.160.60:FF:000254">
    <property type="entry name" value="Odd-skipped related transciption factor 1"/>
    <property type="match status" value="1"/>
</dbReference>
<dbReference type="FunFam" id="3.30.160.60:FF:000090">
    <property type="entry name" value="Odd-skipped-related transciption factor 2"/>
    <property type="match status" value="1"/>
</dbReference>
<dbReference type="FunFam" id="3.30.160.60:FF:000311">
    <property type="entry name" value="protein odd-skipped-related 2 isoform X1"/>
    <property type="match status" value="1"/>
</dbReference>
<dbReference type="Gene3D" id="3.30.160.60">
    <property type="entry name" value="Classic Zinc Finger"/>
    <property type="match status" value="3"/>
</dbReference>
<dbReference type="InterPro" id="IPR050717">
    <property type="entry name" value="C2H2-ZF_Transcription_Reg"/>
</dbReference>
<dbReference type="InterPro" id="IPR036236">
    <property type="entry name" value="Znf_C2H2_sf"/>
</dbReference>
<dbReference type="InterPro" id="IPR013087">
    <property type="entry name" value="Znf_C2H2_type"/>
</dbReference>
<dbReference type="PANTHER" id="PTHR14196">
    <property type="entry name" value="ODD-SKIPPED - RELATED"/>
    <property type="match status" value="1"/>
</dbReference>
<dbReference type="PANTHER" id="PTHR14196:SF5">
    <property type="entry name" value="PROTEIN ODD-SKIPPED-RELATED 1"/>
    <property type="match status" value="1"/>
</dbReference>
<dbReference type="Pfam" id="PF00096">
    <property type="entry name" value="zf-C2H2"/>
    <property type="match status" value="3"/>
</dbReference>
<dbReference type="SMART" id="SM00355">
    <property type="entry name" value="ZnF_C2H2"/>
    <property type="match status" value="3"/>
</dbReference>
<dbReference type="SUPFAM" id="SSF57667">
    <property type="entry name" value="beta-beta-alpha zinc fingers"/>
    <property type="match status" value="2"/>
</dbReference>
<dbReference type="PROSITE" id="PS00028">
    <property type="entry name" value="ZINC_FINGER_C2H2_1"/>
    <property type="match status" value="3"/>
</dbReference>
<dbReference type="PROSITE" id="PS50157">
    <property type="entry name" value="ZINC_FINGER_C2H2_2"/>
    <property type="match status" value="3"/>
</dbReference>
<accession>P86413</accession>
<accession>D0Z721</accession>
<keyword id="KW-0217">Developmental protein</keyword>
<keyword id="KW-0479">Metal-binding</keyword>
<keyword id="KW-0539">Nucleus</keyword>
<keyword id="KW-1185">Reference proteome</keyword>
<keyword id="KW-0677">Repeat</keyword>
<keyword id="KW-0678">Repressor</keyword>
<keyword id="KW-0804">Transcription</keyword>
<keyword id="KW-0805">Transcription regulation</keyword>
<keyword id="KW-0862">Zinc</keyword>
<keyword id="KW-0863">Zinc-finger</keyword>
<evidence type="ECO:0000255" key="1"/>
<evidence type="ECO:0000255" key="2">
    <source>
        <dbReference type="PROSITE-ProRule" id="PRU00042"/>
    </source>
</evidence>
<evidence type="ECO:0000269" key="3">
    <source>
    </source>
</evidence>
<evidence type="ECO:0000269" key="4">
    <source ref="1"/>
</evidence>
<evidence type="ECO:0000303" key="5">
    <source>
    </source>
</evidence>
<evidence type="ECO:0000305" key="6"/>
<organism>
    <name type="scientific">Xenopus laevis</name>
    <name type="common">African clawed frog</name>
    <dbReference type="NCBI Taxonomy" id="8355"/>
    <lineage>
        <taxon>Eukaryota</taxon>
        <taxon>Metazoa</taxon>
        <taxon>Chordata</taxon>
        <taxon>Craniata</taxon>
        <taxon>Vertebrata</taxon>
        <taxon>Euteleostomi</taxon>
        <taxon>Amphibia</taxon>
        <taxon>Batrachia</taxon>
        <taxon>Anura</taxon>
        <taxon>Pipoidea</taxon>
        <taxon>Pipidae</taxon>
        <taxon>Xenopodinae</taxon>
        <taxon>Xenopus</taxon>
        <taxon>Xenopus</taxon>
    </lineage>
</organism>
<reference evidence="6" key="1">
    <citation type="submission" date="2003-09" db="EMBL/GenBank/DDBJ databases">
        <title>Expressed genes in X. laevis embryo.</title>
        <authorList>
            <person name="Kitayama A."/>
            <person name="Terasaka C."/>
            <person name="Mochii M."/>
            <person name="Ueno N."/>
            <person name="Shin-i T."/>
            <person name="Kohara Y."/>
        </authorList>
    </citation>
    <scope>NUCLEOTIDE SEQUENCE [MRNA]</scope>
    <source>
        <tissue evidence="4">Gastrula</tissue>
    </source>
</reference>
<reference evidence="6" key="2">
    <citation type="journal article" date="2007" name="Dev. Biol.">
        <title>Odd-skipped genes encode repressors that control kidney development.</title>
        <authorList>
            <person name="Tena J.J."/>
            <person name="Neto A."/>
            <person name="de la Calle-Mustienes E."/>
            <person name="Bras-Pereira C."/>
            <person name="Casares F."/>
            <person name="Gomez-Skarmeta J.L."/>
        </authorList>
    </citation>
    <scope>IDENTIFICATION</scope>
    <scope>FUNCTION</scope>
    <scope>TISSUE SPECIFICITY</scope>
</reference>
<feature type="chain" id="PRO_0000390730" description="Protein odd-skipped-related 1">
    <location>
        <begin position="1"/>
        <end position="259"/>
    </location>
</feature>
<feature type="zinc finger region" description="C2H2-type 1" evidence="2">
    <location>
        <begin position="168"/>
        <end position="190"/>
    </location>
</feature>
<feature type="zinc finger region" description="C2H2-type 2" evidence="2">
    <location>
        <begin position="196"/>
        <end position="218"/>
    </location>
</feature>
<feature type="zinc finger region" description="C2H2-type 3" evidence="2">
    <location>
        <begin position="224"/>
        <end position="246"/>
    </location>
</feature>
<protein>
    <recommendedName>
        <fullName evidence="5">Protein odd-skipped-related 1</fullName>
        <shortName evidence="5">XOsr1</shortName>
    </recommendedName>
</protein>
<proteinExistence type="evidence at transcript level"/>
<sequence length="259" mass="29418">MGSKTLPAPVPIHPSLQLTNYSFLQAFNGLPVPAEHVPNLYGFSALHAVHLHQWTLGYPTLHLPRSSFSKVPGVSSLVDSRFQIPTFPLFPHMIHPKQESPNLSNKTKPRFDFANLAVAATQEDHCKLGLMNDQGSPPAMGGLLDVTKLTPEKKPTRGRLPSKTKKEFVCKFCGRHFTKSYNLLIHERTHTDERPYTCDICHKAFRRQDHLRDHRYIHSKEKPFKCQECGKGFCQSRTLAVHKTLHTQVKELKPSKIKC</sequence>
<gene>
    <name evidence="5" type="primary">osr1</name>
    <name evidence="5" type="synonym">odd1</name>
</gene>